<name>ERPA_PARP8</name>
<protein>
    <recommendedName>
        <fullName evidence="1">Putative iron-sulfur cluster insertion protein ErpA</fullName>
    </recommendedName>
</protein>
<sequence>MDAVTDTPVTEMPAPFVFTDAAADKVKELIEEEGNPELKLRVFVQGGGCSGFQYGFTFDEAINEDDTVMNKSGVQLLIDSMSYQYLVGAEIDYKDDINGAQFVIKNPNATTTCGCGSSFSV</sequence>
<dbReference type="EMBL" id="CP001043">
    <property type="protein sequence ID" value="ACC71734.1"/>
    <property type="molecule type" value="Genomic_DNA"/>
</dbReference>
<dbReference type="RefSeq" id="WP_007587442.1">
    <property type="nucleotide sequence ID" value="NZ_CADFGH010000002.1"/>
</dbReference>
<dbReference type="SMR" id="B2JGV0"/>
<dbReference type="STRING" id="391038.Bphy_2562"/>
<dbReference type="GeneID" id="55529694"/>
<dbReference type="KEGG" id="bph:Bphy_2562"/>
<dbReference type="eggNOG" id="COG0316">
    <property type="taxonomic scope" value="Bacteria"/>
</dbReference>
<dbReference type="HOGENOM" id="CLU_069054_5_3_4"/>
<dbReference type="OrthoDB" id="9801228at2"/>
<dbReference type="Proteomes" id="UP000001192">
    <property type="component" value="Chromosome 1"/>
</dbReference>
<dbReference type="GO" id="GO:0051537">
    <property type="term" value="F:2 iron, 2 sulfur cluster binding"/>
    <property type="evidence" value="ECO:0007669"/>
    <property type="project" value="UniProtKB-ARBA"/>
</dbReference>
<dbReference type="GO" id="GO:0051539">
    <property type="term" value="F:4 iron, 4 sulfur cluster binding"/>
    <property type="evidence" value="ECO:0007669"/>
    <property type="project" value="TreeGrafter"/>
</dbReference>
<dbReference type="GO" id="GO:0005506">
    <property type="term" value="F:iron ion binding"/>
    <property type="evidence" value="ECO:0007669"/>
    <property type="project" value="UniProtKB-UniRule"/>
</dbReference>
<dbReference type="GO" id="GO:0016226">
    <property type="term" value="P:iron-sulfur cluster assembly"/>
    <property type="evidence" value="ECO:0007669"/>
    <property type="project" value="UniProtKB-UniRule"/>
</dbReference>
<dbReference type="FunFam" id="2.60.300.12:FF:000002">
    <property type="entry name" value="Iron-sulfur cluster insertion protein ErpA"/>
    <property type="match status" value="1"/>
</dbReference>
<dbReference type="Gene3D" id="2.60.300.12">
    <property type="entry name" value="HesB-like domain"/>
    <property type="match status" value="1"/>
</dbReference>
<dbReference type="HAMAP" id="MF_01380">
    <property type="entry name" value="Fe_S_insert_ErpA"/>
    <property type="match status" value="1"/>
</dbReference>
<dbReference type="InterPro" id="IPR000361">
    <property type="entry name" value="FeS_biogenesis"/>
</dbReference>
<dbReference type="InterPro" id="IPR016092">
    <property type="entry name" value="FeS_cluster_insertion"/>
</dbReference>
<dbReference type="InterPro" id="IPR017870">
    <property type="entry name" value="FeS_cluster_insertion_CS"/>
</dbReference>
<dbReference type="InterPro" id="IPR023063">
    <property type="entry name" value="FeS_cluster_insertion_RrpA"/>
</dbReference>
<dbReference type="InterPro" id="IPR035903">
    <property type="entry name" value="HesB-like_dom_sf"/>
</dbReference>
<dbReference type="NCBIfam" id="TIGR00049">
    <property type="entry name" value="iron-sulfur cluster assembly accessory protein"/>
    <property type="match status" value="1"/>
</dbReference>
<dbReference type="NCBIfam" id="NF010147">
    <property type="entry name" value="PRK13623.1"/>
    <property type="match status" value="1"/>
</dbReference>
<dbReference type="PANTHER" id="PTHR43011">
    <property type="entry name" value="IRON-SULFUR CLUSTER ASSEMBLY 2 HOMOLOG, MITOCHONDRIAL"/>
    <property type="match status" value="1"/>
</dbReference>
<dbReference type="PANTHER" id="PTHR43011:SF1">
    <property type="entry name" value="IRON-SULFUR CLUSTER ASSEMBLY 2 HOMOLOG, MITOCHONDRIAL"/>
    <property type="match status" value="1"/>
</dbReference>
<dbReference type="Pfam" id="PF01521">
    <property type="entry name" value="Fe-S_biosyn"/>
    <property type="match status" value="1"/>
</dbReference>
<dbReference type="SUPFAM" id="SSF89360">
    <property type="entry name" value="HesB-like domain"/>
    <property type="match status" value="1"/>
</dbReference>
<dbReference type="PROSITE" id="PS01152">
    <property type="entry name" value="HESB"/>
    <property type="match status" value="1"/>
</dbReference>
<feature type="chain" id="PRO_1000144901" description="Putative iron-sulfur cluster insertion protein ErpA">
    <location>
        <begin position="1"/>
        <end position="121"/>
    </location>
</feature>
<feature type="binding site" evidence="1">
    <location>
        <position position="49"/>
    </location>
    <ligand>
        <name>iron-sulfur cluster</name>
        <dbReference type="ChEBI" id="CHEBI:30408"/>
    </ligand>
</feature>
<feature type="binding site" evidence="1">
    <location>
        <position position="113"/>
    </location>
    <ligand>
        <name>iron-sulfur cluster</name>
        <dbReference type="ChEBI" id="CHEBI:30408"/>
    </ligand>
</feature>
<feature type="binding site" evidence="1">
    <location>
        <position position="115"/>
    </location>
    <ligand>
        <name>iron-sulfur cluster</name>
        <dbReference type="ChEBI" id="CHEBI:30408"/>
    </ligand>
</feature>
<proteinExistence type="inferred from homology"/>
<reference key="1">
    <citation type="journal article" date="2014" name="Stand. Genomic Sci.">
        <title>Complete genome sequence of Burkholderia phymatum STM815(T), a broad host range and efficient nitrogen-fixing symbiont of Mimosa species.</title>
        <authorList>
            <person name="Moulin L."/>
            <person name="Klonowska A."/>
            <person name="Caroline B."/>
            <person name="Booth K."/>
            <person name="Vriezen J.A."/>
            <person name="Melkonian R."/>
            <person name="James E.K."/>
            <person name="Young J.P."/>
            <person name="Bena G."/>
            <person name="Hauser L."/>
            <person name="Land M."/>
            <person name="Kyrpides N."/>
            <person name="Bruce D."/>
            <person name="Chain P."/>
            <person name="Copeland A."/>
            <person name="Pitluck S."/>
            <person name="Woyke T."/>
            <person name="Lizotte-Waniewski M."/>
            <person name="Bristow J."/>
            <person name="Riley M."/>
        </authorList>
    </citation>
    <scope>NUCLEOTIDE SEQUENCE [LARGE SCALE GENOMIC DNA]</scope>
    <source>
        <strain>DSM 17167 / CIP 108236 / LMG 21445 / STM815</strain>
    </source>
</reference>
<accession>B2JGV0</accession>
<evidence type="ECO:0000255" key="1">
    <source>
        <dbReference type="HAMAP-Rule" id="MF_01380"/>
    </source>
</evidence>
<gene>
    <name evidence="1" type="primary">erpA</name>
    <name type="ordered locus">Bphy_2562</name>
</gene>
<organism>
    <name type="scientific">Paraburkholderia phymatum (strain DSM 17167 / CIP 108236 / LMG 21445 / STM815)</name>
    <name type="common">Burkholderia phymatum</name>
    <dbReference type="NCBI Taxonomy" id="391038"/>
    <lineage>
        <taxon>Bacteria</taxon>
        <taxon>Pseudomonadati</taxon>
        <taxon>Pseudomonadota</taxon>
        <taxon>Betaproteobacteria</taxon>
        <taxon>Burkholderiales</taxon>
        <taxon>Burkholderiaceae</taxon>
        <taxon>Paraburkholderia</taxon>
    </lineage>
</organism>
<keyword id="KW-0408">Iron</keyword>
<keyword id="KW-0411">Iron-sulfur</keyword>
<keyword id="KW-0479">Metal-binding</keyword>
<keyword id="KW-1185">Reference proteome</keyword>
<comment type="function">
    <text evidence="1">Required for insertion of 4Fe-4S clusters.</text>
</comment>
<comment type="cofactor">
    <cofactor evidence="1">
        <name>iron-sulfur cluster</name>
        <dbReference type="ChEBI" id="CHEBI:30408"/>
    </cofactor>
    <text evidence="1">Binds 1 iron-sulfur cluster per subunit.</text>
</comment>
<comment type="subunit">
    <text evidence="1">Homodimer.</text>
</comment>
<comment type="similarity">
    <text evidence="1">Belongs to the HesB/IscA family.</text>
</comment>